<name>T2R10_HUMAN</name>
<gene>
    <name type="primary">TAS2R10</name>
</gene>
<proteinExistence type="evidence at protein level"/>
<evidence type="ECO:0000255" key="1"/>
<evidence type="ECO:0000269" key="2">
    <source>
    </source>
</evidence>
<evidence type="ECO:0000269" key="3">
    <source>
    </source>
</evidence>
<evidence type="ECO:0000269" key="4">
    <source>
    </source>
</evidence>
<evidence type="ECO:0000305" key="5"/>
<feature type="chain" id="PRO_0000082238" description="Taste receptor type 2 member 10">
    <location>
        <begin position="1"/>
        <end position="307"/>
    </location>
</feature>
<feature type="topological domain" description="Extracellular" evidence="1">
    <location>
        <begin position="1"/>
        <end position="6"/>
    </location>
</feature>
<feature type="transmembrane region" description="Helical; Name=1" evidence="1">
    <location>
        <begin position="7"/>
        <end position="27"/>
    </location>
</feature>
<feature type="topological domain" description="Cytoplasmic" evidence="1">
    <location>
        <begin position="28"/>
        <end position="42"/>
    </location>
</feature>
<feature type="transmembrane region" description="Helical; Name=2" evidence="1">
    <location>
        <begin position="43"/>
        <end position="63"/>
    </location>
</feature>
<feature type="topological domain" description="Extracellular" evidence="1">
    <location>
        <begin position="64"/>
        <end position="100"/>
    </location>
</feature>
<feature type="transmembrane region" description="Helical; Name=3" evidence="1">
    <location>
        <begin position="101"/>
        <end position="121"/>
    </location>
</feature>
<feature type="topological domain" description="Cytoplasmic" evidence="1">
    <location>
        <begin position="122"/>
        <end position="126"/>
    </location>
</feature>
<feature type="transmembrane region" description="Helical; Name=4" evidence="1">
    <location>
        <begin position="127"/>
        <end position="147"/>
    </location>
</feature>
<feature type="topological domain" description="Extracellular" evidence="1">
    <location>
        <begin position="148"/>
        <end position="179"/>
    </location>
</feature>
<feature type="transmembrane region" description="Helical; Name=5" evidence="1">
    <location>
        <begin position="180"/>
        <end position="200"/>
    </location>
</feature>
<feature type="topological domain" description="Cytoplasmic" evidence="1">
    <location>
        <begin position="201"/>
        <end position="227"/>
    </location>
</feature>
<feature type="transmembrane region" description="Helical; Name=6" evidence="1">
    <location>
        <begin position="228"/>
        <end position="248"/>
    </location>
</feature>
<feature type="topological domain" description="Extracellular" evidence="1">
    <location>
        <begin position="249"/>
        <end position="257"/>
    </location>
</feature>
<feature type="transmembrane region" description="Helical; Name=7" evidence="1">
    <location>
        <begin position="258"/>
        <end position="278"/>
    </location>
</feature>
<feature type="topological domain" description="Cytoplasmic" evidence="1">
    <location>
        <begin position="279"/>
        <end position="307"/>
    </location>
</feature>
<feature type="glycosylation site" description="N-linked (GlcNAc...) asparagine" evidence="1">
    <location>
        <position position="92"/>
    </location>
</feature>
<feature type="glycosylation site" description="N-linked (GlcNAc...) asparagine" evidence="1">
    <location>
        <position position="158"/>
    </location>
</feature>
<feature type="sequence variant" id="VAR_030009" description="In dbSNP:rs597468." evidence="2 3">
    <original>T</original>
    <variation>M</variation>
    <location>
        <position position="156"/>
    </location>
</feature>
<comment type="function">
    <text evidence="4">Gustducin-coupled strychnine receptor implicated in the perception of bitter compounds in the oral cavity and the gastrointestinal tract. Signals through PLCB2 and the calcium-regulated cation channel TRPM5.</text>
</comment>
<comment type="interaction">
    <interactant intactId="EBI-12963900">
        <id>Q9NYW0</id>
    </interactant>
    <interactant intactId="EBI-2868124">
        <id>Q9BSE4</id>
        <label>HERPUD2</label>
    </interactant>
    <organismsDiffer>false</organismsDiffer>
    <experiments>3</experiments>
</comment>
<comment type="interaction">
    <interactant intactId="EBI-12963900">
        <id>Q9NYW0</id>
    </interactant>
    <interactant intactId="EBI-16427978">
        <id>Q9BQ51</id>
        <label>PDCD1LG2</label>
    </interactant>
    <organismsDiffer>false</organismsDiffer>
    <experiments>3</experiments>
</comment>
<comment type="interaction">
    <interactant intactId="EBI-12963900">
        <id>Q9NYW0</id>
    </interactant>
    <interactant intactId="EBI-12275482">
        <id>Q96DX8</id>
        <label>RTP4</label>
    </interactant>
    <organismsDiffer>false</organismsDiffer>
    <experiments>3</experiments>
</comment>
<comment type="interaction">
    <interactant intactId="EBI-12963900">
        <id>Q9NYW0</id>
    </interactant>
    <interactant intactId="EBI-17280858">
        <id>Q8WWF3</id>
        <label>SSMEM1</label>
    </interactant>
    <organismsDiffer>false</organismsDiffer>
    <experiments>3</experiments>
</comment>
<comment type="subcellular location">
    <subcellularLocation>
        <location>Membrane</location>
        <topology>Multi-pass membrane protein</topology>
    </subcellularLocation>
</comment>
<comment type="tissue specificity">
    <text>Expressed in subsets of taste receptor cells of the tongue and palate epithelium and exclusively in gustducin-positive cells.</text>
</comment>
<comment type="miscellaneous">
    <text>Several bitter taste receptors are expressed in a single taste receptor cell.</text>
</comment>
<comment type="similarity">
    <text evidence="5">Belongs to the G-protein coupled receptor T2R family.</text>
</comment>
<dbReference type="EMBL" id="AF227136">
    <property type="protein sequence ID" value="AAF43909.1"/>
    <property type="molecule type" value="Genomic_DNA"/>
</dbReference>
<dbReference type="EMBL" id="AY724946">
    <property type="protein sequence ID" value="AAU21148.1"/>
    <property type="molecule type" value="Genomic_DNA"/>
</dbReference>
<dbReference type="EMBL" id="AC006518">
    <property type="status" value="NOT_ANNOTATED_CDS"/>
    <property type="molecule type" value="Genomic_DNA"/>
</dbReference>
<dbReference type="EMBL" id="BC069089">
    <property type="protein sequence ID" value="AAH69089.1"/>
    <property type="molecule type" value="mRNA"/>
</dbReference>
<dbReference type="EMBL" id="BC101762">
    <property type="protein sequence ID" value="AAI01763.1"/>
    <property type="molecule type" value="mRNA"/>
</dbReference>
<dbReference type="EMBL" id="BC101764">
    <property type="protein sequence ID" value="AAI01765.1"/>
    <property type="molecule type" value="mRNA"/>
</dbReference>
<dbReference type="CCDS" id="CCDS8634.1"/>
<dbReference type="RefSeq" id="NP_076410.1">
    <property type="nucleotide sequence ID" value="NM_023921.2"/>
</dbReference>
<dbReference type="SMR" id="Q9NYW0"/>
<dbReference type="BioGRID" id="119149">
    <property type="interactions" value="4"/>
</dbReference>
<dbReference type="FunCoup" id="Q9NYW0">
    <property type="interactions" value="252"/>
</dbReference>
<dbReference type="IntAct" id="Q9NYW0">
    <property type="interactions" value="4"/>
</dbReference>
<dbReference type="STRING" id="9606.ENSP00000240619"/>
<dbReference type="ChEMBL" id="CHEMBL3559704"/>
<dbReference type="DrugCentral" id="Q9NYW0"/>
<dbReference type="GuidetoPHARMACOLOGY" id="666"/>
<dbReference type="GlyCosmos" id="Q9NYW0">
    <property type="glycosylation" value="2 sites, No reported glycans"/>
</dbReference>
<dbReference type="GlyGen" id="Q9NYW0">
    <property type="glycosylation" value="2 sites"/>
</dbReference>
<dbReference type="iPTMnet" id="Q9NYW0"/>
<dbReference type="PhosphoSitePlus" id="Q9NYW0"/>
<dbReference type="BioMuta" id="TAS2R10"/>
<dbReference type="DMDM" id="311033532"/>
<dbReference type="PaxDb" id="9606-ENSP00000240619"/>
<dbReference type="Antibodypedia" id="23399">
    <property type="antibodies" value="121 antibodies from 24 providers"/>
</dbReference>
<dbReference type="DNASU" id="50839"/>
<dbReference type="Ensembl" id="ENST00000240619.3">
    <property type="protein sequence ID" value="ENSP00000240619.2"/>
    <property type="gene ID" value="ENSG00000121318.3"/>
</dbReference>
<dbReference type="Ensembl" id="ENST00000576159.1">
    <property type="protein sequence ID" value="ENSP00000461683.1"/>
    <property type="gene ID" value="ENSG00000272805.1"/>
</dbReference>
<dbReference type="Ensembl" id="ENST00000611256.2">
    <property type="protein sequence ID" value="ENSP00000482990.1"/>
    <property type="gene ID" value="ENSG00000277238.2"/>
</dbReference>
<dbReference type="GeneID" id="50839"/>
<dbReference type="KEGG" id="hsa:50839"/>
<dbReference type="MANE-Select" id="ENST00000240619.3">
    <property type="protein sequence ID" value="ENSP00000240619.2"/>
    <property type="RefSeq nucleotide sequence ID" value="NM_023921.2"/>
    <property type="RefSeq protein sequence ID" value="NP_076410.1"/>
</dbReference>
<dbReference type="UCSC" id="uc001qyy.2">
    <property type="organism name" value="human"/>
</dbReference>
<dbReference type="AGR" id="HGNC:14918"/>
<dbReference type="CTD" id="50839"/>
<dbReference type="DisGeNET" id="50839"/>
<dbReference type="GeneCards" id="TAS2R10"/>
<dbReference type="HGNC" id="HGNC:14918">
    <property type="gene designation" value="TAS2R10"/>
</dbReference>
<dbReference type="HPA" id="ENSG00000121318">
    <property type="expression patterns" value="Not detected"/>
</dbReference>
<dbReference type="MIM" id="604791">
    <property type="type" value="gene"/>
</dbReference>
<dbReference type="neXtProt" id="NX_Q9NYW0"/>
<dbReference type="OpenTargets" id="ENSG00000121318"/>
<dbReference type="PharmGKB" id="PA37928"/>
<dbReference type="VEuPathDB" id="HostDB:ENSG00000121318"/>
<dbReference type="eggNOG" id="ENOG502T3AX">
    <property type="taxonomic scope" value="Eukaryota"/>
</dbReference>
<dbReference type="GeneTree" id="ENSGT01100000263477"/>
<dbReference type="HOGENOM" id="CLU_072337_3_0_1"/>
<dbReference type="InParanoid" id="Q9NYW0"/>
<dbReference type="OMA" id="WLFTFPQ"/>
<dbReference type="OrthoDB" id="8876749at2759"/>
<dbReference type="PAN-GO" id="Q9NYW0">
    <property type="GO annotations" value="2 GO annotations based on evolutionary models"/>
</dbReference>
<dbReference type="PhylomeDB" id="Q9NYW0"/>
<dbReference type="TreeFam" id="TF335891"/>
<dbReference type="PathwayCommons" id="Q9NYW0"/>
<dbReference type="Reactome" id="R-HSA-418594">
    <property type="pathway name" value="G alpha (i) signalling events"/>
</dbReference>
<dbReference type="Reactome" id="R-HSA-420499">
    <property type="pathway name" value="Class C/3 (Metabotropic glutamate/pheromone receptors)"/>
</dbReference>
<dbReference type="Reactome" id="R-HSA-9717207">
    <property type="pathway name" value="Sensory perception of sweet, bitter, and umami (glutamate) taste"/>
</dbReference>
<dbReference type="SignaLink" id="Q9NYW0"/>
<dbReference type="BioGRID-ORCS" id="50839">
    <property type="hits" value="51 hits in 1127 CRISPR screens"/>
</dbReference>
<dbReference type="GeneWiki" id="TAS2R10"/>
<dbReference type="GenomeRNAi" id="50839"/>
<dbReference type="Pharos" id="Q9NYW0">
    <property type="development level" value="Tchem"/>
</dbReference>
<dbReference type="PRO" id="PR:Q9NYW0"/>
<dbReference type="Proteomes" id="UP000005640">
    <property type="component" value="Chromosome 12"/>
</dbReference>
<dbReference type="RNAct" id="Q9NYW0">
    <property type="molecule type" value="protein"/>
</dbReference>
<dbReference type="Bgee" id="ENSG00000121318">
    <property type="expression patterns" value="Expressed in right adrenal gland cortex and 81 other cell types or tissues"/>
</dbReference>
<dbReference type="GO" id="GO:0016020">
    <property type="term" value="C:membrane"/>
    <property type="evidence" value="ECO:0000318"/>
    <property type="project" value="GO_Central"/>
</dbReference>
<dbReference type="GO" id="GO:0005886">
    <property type="term" value="C:plasma membrane"/>
    <property type="evidence" value="ECO:0000304"/>
    <property type="project" value="Reactome"/>
</dbReference>
<dbReference type="GO" id="GO:0033038">
    <property type="term" value="F:bitter taste receptor activity"/>
    <property type="evidence" value="ECO:0000314"/>
    <property type="project" value="UniProtKB"/>
</dbReference>
<dbReference type="GO" id="GO:0004930">
    <property type="term" value="F:G protein-coupled receptor activity"/>
    <property type="evidence" value="ECO:0007669"/>
    <property type="project" value="UniProtKB-KW"/>
</dbReference>
<dbReference type="GO" id="GO:0008527">
    <property type="term" value="F:taste receptor activity"/>
    <property type="evidence" value="ECO:0000304"/>
    <property type="project" value="UniProtKB"/>
</dbReference>
<dbReference type="GO" id="GO:0001580">
    <property type="term" value="P:detection of chemical stimulus involved in sensory perception of bitter taste"/>
    <property type="evidence" value="ECO:0000314"/>
    <property type="project" value="UniProtKB"/>
</dbReference>
<dbReference type="CDD" id="cd15021">
    <property type="entry name" value="7tm_TAS2R10"/>
    <property type="match status" value="1"/>
</dbReference>
<dbReference type="FunFam" id="1.20.1070.10:FF:000042">
    <property type="entry name" value="Taste receptor type 2 member 7"/>
    <property type="match status" value="1"/>
</dbReference>
<dbReference type="Gene3D" id="1.20.1070.10">
    <property type="entry name" value="Rhodopsin 7-helix transmembrane proteins"/>
    <property type="match status" value="1"/>
</dbReference>
<dbReference type="InterPro" id="IPR007960">
    <property type="entry name" value="TAS2R"/>
</dbReference>
<dbReference type="PANTHER" id="PTHR11394">
    <property type="entry name" value="TASTE RECEPTOR TYPE 2"/>
    <property type="match status" value="1"/>
</dbReference>
<dbReference type="PANTHER" id="PTHR11394:SF63">
    <property type="entry name" value="TASTE RECEPTOR TYPE 2 MEMBER 10"/>
    <property type="match status" value="1"/>
</dbReference>
<dbReference type="Pfam" id="PF05296">
    <property type="entry name" value="TAS2R"/>
    <property type="match status" value="1"/>
</dbReference>
<dbReference type="SUPFAM" id="SSF81321">
    <property type="entry name" value="Family A G protein-coupled receptor-like"/>
    <property type="match status" value="1"/>
</dbReference>
<keyword id="KW-0297">G-protein coupled receptor</keyword>
<keyword id="KW-0325">Glycoprotein</keyword>
<keyword id="KW-0472">Membrane</keyword>
<keyword id="KW-0675">Receptor</keyword>
<keyword id="KW-1185">Reference proteome</keyword>
<keyword id="KW-0716">Sensory transduction</keyword>
<keyword id="KW-0919">Taste</keyword>
<keyword id="KW-0807">Transducer</keyword>
<keyword id="KW-0812">Transmembrane</keyword>
<keyword id="KW-1133">Transmembrane helix</keyword>
<organism>
    <name type="scientific">Homo sapiens</name>
    <name type="common">Human</name>
    <dbReference type="NCBI Taxonomy" id="9606"/>
    <lineage>
        <taxon>Eukaryota</taxon>
        <taxon>Metazoa</taxon>
        <taxon>Chordata</taxon>
        <taxon>Craniata</taxon>
        <taxon>Vertebrata</taxon>
        <taxon>Euteleostomi</taxon>
        <taxon>Mammalia</taxon>
        <taxon>Eutheria</taxon>
        <taxon>Euarchontoglires</taxon>
        <taxon>Primates</taxon>
        <taxon>Haplorrhini</taxon>
        <taxon>Catarrhini</taxon>
        <taxon>Hominidae</taxon>
        <taxon>Homo</taxon>
    </lineage>
</organism>
<reference key="1">
    <citation type="journal article" date="2000" name="Cell">
        <title>A novel family of mammalian taste receptors.</title>
        <authorList>
            <person name="Adler E."/>
            <person name="Hoon M.A."/>
            <person name="Mueller K.L."/>
            <person name="Chandrashekar J."/>
            <person name="Ryba N.J.P."/>
            <person name="Zuker C.S."/>
        </authorList>
    </citation>
    <scope>NUCLEOTIDE SEQUENCE [GENOMIC DNA]</scope>
    <scope>TOPOLOGY</scope>
</reference>
<reference key="2">
    <citation type="journal article" date="2005" name="Mol. Biol. Evol.">
        <title>Evolution of bitter taste receptors in humans and apes.</title>
        <authorList>
            <person name="Fischer A."/>
            <person name="Gilad Y."/>
            <person name="Man O."/>
            <person name="Paeaebo S."/>
        </authorList>
    </citation>
    <scope>NUCLEOTIDE SEQUENCE [GENOMIC DNA]</scope>
    <scope>VARIANT MET-156</scope>
</reference>
<reference key="3">
    <citation type="journal article" date="2006" name="Nature">
        <title>The finished DNA sequence of human chromosome 12.</title>
        <authorList>
            <person name="Scherer S.E."/>
            <person name="Muzny D.M."/>
            <person name="Buhay C.J."/>
            <person name="Chen R."/>
            <person name="Cree A."/>
            <person name="Ding Y."/>
            <person name="Dugan-Rocha S."/>
            <person name="Gill R."/>
            <person name="Gunaratne P."/>
            <person name="Harris R.A."/>
            <person name="Hawes A.C."/>
            <person name="Hernandez J."/>
            <person name="Hodgson A.V."/>
            <person name="Hume J."/>
            <person name="Jackson A."/>
            <person name="Khan Z.M."/>
            <person name="Kovar-Smith C."/>
            <person name="Lewis L.R."/>
            <person name="Lozado R.J."/>
            <person name="Metzker M.L."/>
            <person name="Milosavljevic A."/>
            <person name="Miner G.R."/>
            <person name="Montgomery K.T."/>
            <person name="Morgan M.B."/>
            <person name="Nazareth L.V."/>
            <person name="Scott G."/>
            <person name="Sodergren E."/>
            <person name="Song X.-Z."/>
            <person name="Steffen D."/>
            <person name="Lovering R.C."/>
            <person name="Wheeler D.A."/>
            <person name="Worley K.C."/>
            <person name="Yuan Y."/>
            <person name="Zhang Z."/>
            <person name="Adams C.Q."/>
            <person name="Ansari-Lari M.A."/>
            <person name="Ayele M."/>
            <person name="Brown M.J."/>
            <person name="Chen G."/>
            <person name="Chen Z."/>
            <person name="Clerc-Blankenburg K.P."/>
            <person name="Davis C."/>
            <person name="Delgado O."/>
            <person name="Dinh H.H."/>
            <person name="Draper H."/>
            <person name="Gonzalez-Garay M.L."/>
            <person name="Havlak P."/>
            <person name="Jackson L.R."/>
            <person name="Jacob L.S."/>
            <person name="Kelly S.H."/>
            <person name="Li L."/>
            <person name="Li Z."/>
            <person name="Liu J."/>
            <person name="Liu W."/>
            <person name="Lu J."/>
            <person name="Maheshwari M."/>
            <person name="Nguyen B.-V."/>
            <person name="Okwuonu G.O."/>
            <person name="Pasternak S."/>
            <person name="Perez L.M."/>
            <person name="Plopper F.J.H."/>
            <person name="Santibanez J."/>
            <person name="Shen H."/>
            <person name="Tabor P.E."/>
            <person name="Verduzco D."/>
            <person name="Waldron L."/>
            <person name="Wang Q."/>
            <person name="Williams G.A."/>
            <person name="Zhang J."/>
            <person name="Zhou J."/>
            <person name="Allen C.C."/>
            <person name="Amin A.G."/>
            <person name="Anyalebechi V."/>
            <person name="Bailey M."/>
            <person name="Barbaria J.A."/>
            <person name="Bimage K.E."/>
            <person name="Bryant N.P."/>
            <person name="Burch P.E."/>
            <person name="Burkett C.E."/>
            <person name="Burrell K.L."/>
            <person name="Calderon E."/>
            <person name="Cardenas V."/>
            <person name="Carter K."/>
            <person name="Casias K."/>
            <person name="Cavazos I."/>
            <person name="Cavazos S.R."/>
            <person name="Ceasar H."/>
            <person name="Chacko J."/>
            <person name="Chan S.N."/>
            <person name="Chavez D."/>
            <person name="Christopoulos C."/>
            <person name="Chu J."/>
            <person name="Cockrell R."/>
            <person name="Cox C.D."/>
            <person name="Dang M."/>
            <person name="Dathorne S.R."/>
            <person name="David R."/>
            <person name="Davis C.M."/>
            <person name="Davy-Carroll L."/>
            <person name="Deshazo D.R."/>
            <person name="Donlin J.E."/>
            <person name="D'Souza L."/>
            <person name="Eaves K.A."/>
            <person name="Egan A."/>
            <person name="Emery-Cohen A.J."/>
            <person name="Escotto M."/>
            <person name="Flagg N."/>
            <person name="Forbes L.D."/>
            <person name="Gabisi A.M."/>
            <person name="Garza M."/>
            <person name="Hamilton C."/>
            <person name="Henderson N."/>
            <person name="Hernandez O."/>
            <person name="Hines S."/>
            <person name="Hogues M.E."/>
            <person name="Huang M."/>
            <person name="Idlebird D.G."/>
            <person name="Johnson R."/>
            <person name="Jolivet A."/>
            <person name="Jones S."/>
            <person name="Kagan R."/>
            <person name="King L.M."/>
            <person name="Leal B."/>
            <person name="Lebow H."/>
            <person name="Lee S."/>
            <person name="LeVan J.M."/>
            <person name="Lewis L.C."/>
            <person name="London P."/>
            <person name="Lorensuhewa L.M."/>
            <person name="Loulseged H."/>
            <person name="Lovett D.A."/>
            <person name="Lucier A."/>
            <person name="Lucier R.L."/>
            <person name="Ma J."/>
            <person name="Madu R.C."/>
            <person name="Mapua P."/>
            <person name="Martindale A.D."/>
            <person name="Martinez E."/>
            <person name="Massey E."/>
            <person name="Mawhiney S."/>
            <person name="Meador M.G."/>
            <person name="Mendez S."/>
            <person name="Mercado C."/>
            <person name="Mercado I.C."/>
            <person name="Merritt C.E."/>
            <person name="Miner Z.L."/>
            <person name="Minja E."/>
            <person name="Mitchell T."/>
            <person name="Mohabbat F."/>
            <person name="Mohabbat K."/>
            <person name="Montgomery B."/>
            <person name="Moore N."/>
            <person name="Morris S."/>
            <person name="Munidasa M."/>
            <person name="Ngo R.N."/>
            <person name="Nguyen N.B."/>
            <person name="Nickerson E."/>
            <person name="Nwaokelemeh O.O."/>
            <person name="Nwokenkwo S."/>
            <person name="Obregon M."/>
            <person name="Oguh M."/>
            <person name="Oragunye N."/>
            <person name="Oviedo R.J."/>
            <person name="Parish B.J."/>
            <person name="Parker D.N."/>
            <person name="Parrish J."/>
            <person name="Parks K.L."/>
            <person name="Paul H.A."/>
            <person name="Payton B.A."/>
            <person name="Perez A."/>
            <person name="Perrin W."/>
            <person name="Pickens A."/>
            <person name="Primus E.L."/>
            <person name="Pu L.-L."/>
            <person name="Puazo M."/>
            <person name="Quiles M.M."/>
            <person name="Quiroz J.B."/>
            <person name="Rabata D."/>
            <person name="Reeves K."/>
            <person name="Ruiz S.J."/>
            <person name="Shao H."/>
            <person name="Sisson I."/>
            <person name="Sonaike T."/>
            <person name="Sorelle R.P."/>
            <person name="Sutton A.E."/>
            <person name="Svatek A.F."/>
            <person name="Svetz L.A."/>
            <person name="Tamerisa K.S."/>
            <person name="Taylor T.R."/>
            <person name="Teague B."/>
            <person name="Thomas N."/>
            <person name="Thorn R.D."/>
            <person name="Trejos Z.Y."/>
            <person name="Trevino B.K."/>
            <person name="Ukegbu O.N."/>
            <person name="Urban J.B."/>
            <person name="Vasquez L.I."/>
            <person name="Vera V.A."/>
            <person name="Villasana D.M."/>
            <person name="Wang L."/>
            <person name="Ward-Moore S."/>
            <person name="Warren J.T."/>
            <person name="Wei X."/>
            <person name="White F."/>
            <person name="Williamson A.L."/>
            <person name="Wleczyk R."/>
            <person name="Wooden H.S."/>
            <person name="Wooden S.H."/>
            <person name="Yen J."/>
            <person name="Yoon L."/>
            <person name="Yoon V."/>
            <person name="Zorrilla S.E."/>
            <person name="Nelson D."/>
            <person name="Kucherlapati R."/>
            <person name="Weinstock G."/>
            <person name="Gibbs R.A."/>
        </authorList>
    </citation>
    <scope>NUCLEOTIDE SEQUENCE [LARGE SCALE GENOMIC DNA]</scope>
</reference>
<reference key="4">
    <citation type="journal article" date="2004" name="Genome Res.">
        <title>The status, quality, and expansion of the NIH full-length cDNA project: the Mammalian Gene Collection (MGC).</title>
        <authorList>
            <consortium name="The MGC Project Team"/>
        </authorList>
    </citation>
    <scope>NUCLEOTIDE SEQUENCE [LARGE SCALE MRNA]</scope>
    <scope>VARIANT MET-156</scope>
    <source>
        <tissue>Brain</tissue>
    </source>
</reference>
<reference key="5">
    <citation type="journal article" date="2000" name="Cell">
        <title>T2Rs function as bitter taste receptors.</title>
        <authorList>
            <person name="Chandrashekar J."/>
            <person name="Mueller K.L."/>
            <person name="Hoon M.A."/>
            <person name="Adler E."/>
            <person name="Feng L."/>
            <person name="Guo W."/>
            <person name="Zuker C.S."/>
            <person name="Ryba N.J.P."/>
        </authorList>
    </citation>
    <scope>CHARACTERIZATION</scope>
</reference>
<reference key="6">
    <citation type="journal article" date="2005" name="Nature">
        <title>The receptors and coding logic for bitter taste.</title>
        <authorList>
            <person name="Mueller K.L."/>
            <person name="Hoon M.A."/>
            <person name="Erlenbach I."/>
            <person name="Chandrashekar J."/>
            <person name="Zuker C.S."/>
            <person name="Ryba N.J."/>
        </authorList>
    </citation>
    <scope>FUNCTION</scope>
</reference>
<reference key="7">
    <citation type="journal article" date="2002" name="Curr. Opin. Neurobiol.">
        <title>Receptors for bitter and sweet taste.</title>
        <authorList>
            <person name="Montmayeur J.-P."/>
            <person name="Matsunami H."/>
        </authorList>
    </citation>
    <scope>REVIEW</scope>
</reference>
<reference key="8">
    <citation type="journal article" date="2002" name="J. Biol. Chem.">
        <title>Molecular mechanisms of bitter and sweet taste transduction.</title>
        <authorList>
            <person name="Margolskee R.F."/>
        </authorList>
    </citation>
    <scope>REVIEW</scope>
</reference>
<reference key="9">
    <citation type="journal article" date="2003" name="Cell">
        <title>Coding of sweet, bitter, and umami tastes: different receptor cells sharing similar signaling pathways.</title>
        <authorList>
            <person name="Zhang Y."/>
            <person name="Hoon M.A."/>
            <person name="Chandrashekar J."/>
            <person name="Mueller K.L."/>
            <person name="Cook B."/>
            <person name="Wu D."/>
            <person name="Zuker C.S."/>
            <person name="Ryba N.J."/>
        </authorList>
    </citation>
    <scope>REVIEW</scope>
</reference>
<sequence length="307" mass="35365">MLRVVEGIFIFVVVSESVFGVLGNGFIGLVNCIDCAKNKLSTIGFILTGLAISRIFLIWIIITDGFIQIFSPNIYASGNLIEYISYFWVIGNQSSMWFATSLSIFYFLKIANFSNYIFLWLKSRTNMVLPFMIVFLLISSLLNFAYIAKILNDYKTKNDTVWDLNMYKSEYFIKQILLNLGVIFFFTLSLITCIFLIISLWRHNRQMQSNVTGLRDSNTEAHVKAMKVLISFIILFILYFIGMAIEISCFTVRENKLLLMFGMTTTAIYPWGHSFILILGNSKLKQASLRVLQQLKCCEKRKNLRVT</sequence>
<protein>
    <recommendedName>
        <fullName>Taste receptor type 2 member 10</fullName>
        <shortName>T2R10</shortName>
    </recommendedName>
    <alternativeName>
        <fullName>Taste receptor family B member 2</fullName>
        <shortName>TRB2</shortName>
    </alternativeName>
</protein>
<accession>Q9NYW0</accession>
<accession>Q3MIM9</accession>
<accession>Q6NTD9</accession>